<organism>
    <name type="scientific">Saccharomyces cerevisiae (strain YJM789)</name>
    <name type="common">Baker's yeast</name>
    <dbReference type="NCBI Taxonomy" id="307796"/>
    <lineage>
        <taxon>Eukaryota</taxon>
        <taxon>Fungi</taxon>
        <taxon>Dikarya</taxon>
        <taxon>Ascomycota</taxon>
        <taxon>Saccharomycotina</taxon>
        <taxon>Saccharomycetes</taxon>
        <taxon>Saccharomycetales</taxon>
        <taxon>Saccharomycetaceae</taxon>
        <taxon>Saccharomyces</taxon>
    </lineage>
</organism>
<sequence length="629" mass="70366">MFASRFDPSQLTAPAASAPEGIVGTTPPAIVPLKRQATESDNEEYGSHQDSDESSNSSSEEDEDRMQVDYGASEEDSSEVEEEESKPSTHSTVLSRFKQTVSLQERLGASDIAESKEDESIEDEAASTHQLKQIPQPEFVKNPMNLNTNSLQFKSTGWLNTEKIYYDNSLIKPFSDYANELEAKLLQNICKNFSTNTFPIQSIILDSILPVLNFTLNVSKRNFTRRIGDILVNAATGSGKTLAYSIPIVQTLFKRQINRLRCIIIVPTKLLINQVYTTLTKLTQGTSLIVSIAKLENSLKDEHKKLSNLEPDILITTPGRLVDHLNMKSINLKNLKFLIIDEADRLLNQSFQGWCPKLMSHLKTDKLDTLPGNVIKMIFSATLTTNTEKLNGLNLYKPKLFLKQTDKLYQLPNKLNEFNINIPTAKSIYKPLILLYSICQFMAHSPIAAKILIFVKSNESSIRLSKLLQLICESRSQSSVLKNLQNLAVSINSVNSNNSKAENKKIVANFSHPSESAGITILITTDIMSRGIDINDITQVINYDPPMSSQQYVHRVGRTARANELGSAYNLLVGRGERTFFDDLNKDLDRDGKSVQPLELDFTLLESDSELYTSSLESLKNYHNNTAQA</sequence>
<reference key="1">
    <citation type="journal article" date="2007" name="Proc. Natl. Acad. Sci. U.S.A.">
        <title>Genome sequencing and comparative analysis of Saccharomyces cerevisiae strain YJM789.</title>
        <authorList>
            <person name="Wei W."/>
            <person name="McCusker J.H."/>
            <person name="Hyman R.W."/>
            <person name="Jones T."/>
            <person name="Ning Y."/>
            <person name="Cao Z."/>
            <person name="Gu Z."/>
            <person name="Bruno D."/>
            <person name="Miranda M."/>
            <person name="Nguyen M."/>
            <person name="Wilhelmy J."/>
            <person name="Komp C."/>
            <person name="Tamse R."/>
            <person name="Wang X."/>
            <person name="Jia P."/>
            <person name="Luedi P."/>
            <person name="Oefner P.J."/>
            <person name="David L."/>
            <person name="Dietrich F.S."/>
            <person name="Li Y."/>
            <person name="Davis R.W."/>
            <person name="Steinmetz L.M."/>
        </authorList>
    </citation>
    <scope>NUCLEOTIDE SEQUENCE [LARGE SCALE GENOMIC DNA]</scope>
    <source>
        <strain>YJM789</strain>
    </source>
</reference>
<gene>
    <name type="primary">DBP6</name>
    <name type="ORF">SCY_4824</name>
</gene>
<name>DBP6_YEAS7</name>
<feature type="chain" id="PRO_0000310240" description="ATP-dependent RNA helicase DBP6">
    <location>
        <begin position="1"/>
        <end position="629"/>
    </location>
</feature>
<feature type="domain" description="Helicase ATP-binding" evidence="3">
    <location>
        <begin position="221"/>
        <end position="401"/>
    </location>
</feature>
<feature type="domain" description="Helicase C-terminal" evidence="4">
    <location>
        <begin position="437"/>
        <end position="603"/>
    </location>
</feature>
<feature type="region of interest" description="Disordered" evidence="5">
    <location>
        <begin position="1"/>
        <end position="130"/>
    </location>
</feature>
<feature type="short sequence motif" description="Q motif">
    <location>
        <begin position="197"/>
        <end position="205"/>
    </location>
</feature>
<feature type="short sequence motif" description="DEAD box">
    <location>
        <begin position="341"/>
        <end position="344"/>
    </location>
</feature>
<feature type="compositionally biased region" description="Acidic residues" evidence="5">
    <location>
        <begin position="72"/>
        <end position="84"/>
    </location>
</feature>
<feature type="compositionally biased region" description="Polar residues" evidence="5">
    <location>
        <begin position="88"/>
        <end position="103"/>
    </location>
</feature>
<feature type="compositionally biased region" description="Acidic residues" evidence="5">
    <location>
        <begin position="116"/>
        <end position="125"/>
    </location>
</feature>
<feature type="binding site" evidence="3">
    <location>
        <begin position="234"/>
        <end position="241"/>
    </location>
    <ligand>
        <name>ATP</name>
        <dbReference type="ChEBI" id="CHEBI:30616"/>
    </ligand>
</feature>
<feature type="modified residue" description="Phosphoserine" evidence="2">
    <location>
        <position position="73"/>
    </location>
</feature>
<feature type="modified residue" description="Phosphoserine" evidence="2">
    <location>
        <position position="77"/>
    </location>
</feature>
<feature type="modified residue" description="Phosphoserine" evidence="2">
    <location>
        <position position="78"/>
    </location>
</feature>
<protein>
    <recommendedName>
        <fullName>ATP-dependent RNA helicase DBP6</fullName>
        <ecNumber>3.6.4.13</ecNumber>
    </recommendedName>
    <alternativeName>
        <fullName>DEAD box protein 6</fullName>
    </alternativeName>
</protein>
<accession>A6ZSB3</accession>
<comment type="function">
    <text evidence="1">ATP-binding RNA helicase involved in the biogenesis of 60S ribosomal subunits and is required for the normal formation of 25S and 5.8S rRNAs.</text>
</comment>
<comment type="catalytic activity">
    <reaction>
        <text>ATP + H2O = ADP + phosphate + H(+)</text>
        <dbReference type="Rhea" id="RHEA:13065"/>
        <dbReference type="ChEBI" id="CHEBI:15377"/>
        <dbReference type="ChEBI" id="CHEBI:15378"/>
        <dbReference type="ChEBI" id="CHEBI:30616"/>
        <dbReference type="ChEBI" id="CHEBI:43474"/>
        <dbReference type="ChEBI" id="CHEBI:456216"/>
        <dbReference type="EC" id="3.6.4.13"/>
    </reaction>
</comment>
<comment type="subunit">
    <text evidence="1">Associated with pre-ribosomal particles. Interacts with DBP9 and RSA3. Together with NOP8, URB1, URB2 and RSA3, forms an RNA-independent complex, which is required during early maturation of nascent 60S ribosomal subunits (By similarity).</text>
</comment>
<comment type="subcellular location">
    <subcellularLocation>
        <location evidence="1">Nucleus</location>
        <location evidence="1">Nucleolus</location>
    </subcellularLocation>
</comment>
<comment type="domain">
    <text>The Q motif is unique to and characteristic of the DEAD box family of RNA helicases and controls ATP binding and hydrolysis.</text>
</comment>
<comment type="similarity">
    <text evidence="6">Belongs to the DEAD box helicase family. DDX51/DBP6 subfamily.</text>
</comment>
<evidence type="ECO:0000250" key="1"/>
<evidence type="ECO:0000250" key="2">
    <source>
        <dbReference type="UniProtKB" id="P53734"/>
    </source>
</evidence>
<evidence type="ECO:0000255" key="3">
    <source>
        <dbReference type="PROSITE-ProRule" id="PRU00541"/>
    </source>
</evidence>
<evidence type="ECO:0000255" key="4">
    <source>
        <dbReference type="PROSITE-ProRule" id="PRU00542"/>
    </source>
</evidence>
<evidence type="ECO:0000256" key="5">
    <source>
        <dbReference type="SAM" id="MobiDB-lite"/>
    </source>
</evidence>
<evidence type="ECO:0000305" key="6"/>
<proteinExistence type="inferred from homology"/>
<dbReference type="EC" id="3.6.4.13"/>
<dbReference type="EMBL" id="AAFW02000067">
    <property type="protein sequence ID" value="EDN62845.1"/>
    <property type="molecule type" value="Genomic_DNA"/>
</dbReference>
<dbReference type="SMR" id="A6ZSB3"/>
<dbReference type="HOGENOM" id="CLU_003041_15_2_1"/>
<dbReference type="OrthoDB" id="33086at4893"/>
<dbReference type="Proteomes" id="UP000007060">
    <property type="component" value="Unassembled WGS sequence"/>
</dbReference>
<dbReference type="GO" id="GO:0005730">
    <property type="term" value="C:nucleolus"/>
    <property type="evidence" value="ECO:0007669"/>
    <property type="project" value="UniProtKB-SubCell"/>
</dbReference>
<dbReference type="GO" id="GO:0005524">
    <property type="term" value="F:ATP binding"/>
    <property type="evidence" value="ECO:0007669"/>
    <property type="project" value="UniProtKB-KW"/>
</dbReference>
<dbReference type="GO" id="GO:0016887">
    <property type="term" value="F:ATP hydrolysis activity"/>
    <property type="evidence" value="ECO:0007669"/>
    <property type="project" value="RHEA"/>
</dbReference>
<dbReference type="GO" id="GO:0003723">
    <property type="term" value="F:RNA binding"/>
    <property type="evidence" value="ECO:0007669"/>
    <property type="project" value="UniProtKB-KW"/>
</dbReference>
<dbReference type="GO" id="GO:0003724">
    <property type="term" value="F:RNA helicase activity"/>
    <property type="evidence" value="ECO:0007669"/>
    <property type="project" value="UniProtKB-EC"/>
</dbReference>
<dbReference type="GO" id="GO:0006364">
    <property type="term" value="P:rRNA processing"/>
    <property type="evidence" value="ECO:0007669"/>
    <property type="project" value="UniProtKB-KW"/>
</dbReference>
<dbReference type="CDD" id="cd17956">
    <property type="entry name" value="DEADc_DDX51"/>
    <property type="match status" value="1"/>
</dbReference>
<dbReference type="CDD" id="cd18787">
    <property type="entry name" value="SF2_C_DEAD"/>
    <property type="match status" value="1"/>
</dbReference>
<dbReference type="Gene3D" id="3.40.50.300">
    <property type="entry name" value="P-loop containing nucleotide triphosphate hydrolases"/>
    <property type="match status" value="2"/>
</dbReference>
<dbReference type="InterPro" id="IPR011545">
    <property type="entry name" value="DEAD/DEAH_box_helicase_dom"/>
</dbReference>
<dbReference type="InterPro" id="IPR014001">
    <property type="entry name" value="Helicase_ATP-bd"/>
</dbReference>
<dbReference type="InterPro" id="IPR001650">
    <property type="entry name" value="Helicase_C-like"/>
</dbReference>
<dbReference type="InterPro" id="IPR027417">
    <property type="entry name" value="P-loop_NTPase"/>
</dbReference>
<dbReference type="InterPro" id="IPR000629">
    <property type="entry name" value="RNA-helicase_DEAD-box_CS"/>
</dbReference>
<dbReference type="PANTHER" id="PTHR24031">
    <property type="entry name" value="RNA HELICASE"/>
    <property type="match status" value="1"/>
</dbReference>
<dbReference type="Pfam" id="PF00270">
    <property type="entry name" value="DEAD"/>
    <property type="match status" value="1"/>
</dbReference>
<dbReference type="Pfam" id="PF00271">
    <property type="entry name" value="Helicase_C"/>
    <property type="match status" value="1"/>
</dbReference>
<dbReference type="SMART" id="SM00487">
    <property type="entry name" value="DEXDc"/>
    <property type="match status" value="1"/>
</dbReference>
<dbReference type="SMART" id="SM00490">
    <property type="entry name" value="HELICc"/>
    <property type="match status" value="1"/>
</dbReference>
<dbReference type="SUPFAM" id="SSF52540">
    <property type="entry name" value="P-loop containing nucleoside triphosphate hydrolases"/>
    <property type="match status" value="1"/>
</dbReference>
<dbReference type="PROSITE" id="PS00039">
    <property type="entry name" value="DEAD_ATP_HELICASE"/>
    <property type="match status" value="1"/>
</dbReference>
<dbReference type="PROSITE" id="PS51192">
    <property type="entry name" value="HELICASE_ATP_BIND_1"/>
    <property type="match status" value="1"/>
</dbReference>
<dbReference type="PROSITE" id="PS51194">
    <property type="entry name" value="HELICASE_CTER"/>
    <property type="match status" value="1"/>
</dbReference>
<keyword id="KW-0067">ATP-binding</keyword>
<keyword id="KW-0347">Helicase</keyword>
<keyword id="KW-0378">Hydrolase</keyword>
<keyword id="KW-0547">Nucleotide-binding</keyword>
<keyword id="KW-0539">Nucleus</keyword>
<keyword id="KW-0597">Phosphoprotein</keyword>
<keyword id="KW-0690">Ribosome biogenesis</keyword>
<keyword id="KW-0694">RNA-binding</keyword>
<keyword id="KW-0698">rRNA processing</keyword>